<accession>Q9L4Q8</accession>
<accession>E3PU03</accession>
<feature type="chain" id="PRO_0000139328" description="Proline--tRNA ligase">
    <location>
        <begin position="1"/>
        <end position="481"/>
    </location>
</feature>
<reference key="1">
    <citation type="journal article" date="1999" name="J. Biol. Chem.">
        <title>Identification of D-proline reductase from Clostridium sticklandii as a selenoenzyme and indications for a catalytically active pyruvoyl group derived from a cysteine residue by cleavage of a proprotein.</title>
        <authorList>
            <person name="Kabisch U.C."/>
            <person name="Graentzdoerffer A."/>
            <person name="Schierhorn A."/>
            <person name="Ruecknagel K.P."/>
            <person name="Andreesen J.R."/>
            <person name="Pich A."/>
        </authorList>
    </citation>
    <scope>NUCLEOTIDE SEQUENCE [GENOMIC DNA]</scope>
    <source>
        <strain>ATCC 12662 / DSM 519 / JCM 1433 / CCUG 9281 / NCIMB 10654 / HF</strain>
    </source>
</reference>
<reference key="2">
    <citation type="journal article" date="2010" name="BMC Genomics">
        <title>Clostridium sticklandii, a specialist in amino acid degradation:revisiting its metabolism through its genome sequence.</title>
        <authorList>
            <person name="Fonknechten N."/>
            <person name="Chaussonnerie S."/>
            <person name="Tricot S."/>
            <person name="Lajus A."/>
            <person name="Andreesen J.R."/>
            <person name="Perchat N."/>
            <person name="Pelletier E."/>
            <person name="Gouyvenoux M."/>
            <person name="Barbe V."/>
            <person name="Salanoubat M."/>
            <person name="Le Paslier D."/>
            <person name="Weissenbach J."/>
            <person name="Cohen G.N."/>
            <person name="Kreimeyer A."/>
        </authorList>
    </citation>
    <scope>NUCLEOTIDE SEQUENCE [LARGE SCALE GENOMIC DNA]</scope>
    <source>
        <strain>ATCC 12662 / DSM 519 / JCM 1433 / CCUG 9281 / NCIMB 10654 / HF</strain>
    </source>
</reference>
<reference key="3">
    <citation type="journal article" date="2002" name="J. Biol. Chem.">
        <title>Cysteine activation is an inherent in vitro property of prolyl-tRNA synthetases.</title>
        <authorList>
            <person name="Ahel I."/>
            <person name="Stathopoulos C."/>
            <person name="Ambrogelly A."/>
            <person name="Sauerwald A."/>
            <person name="Toogood H."/>
            <person name="Hartsch T."/>
            <person name="Soell D."/>
        </authorList>
    </citation>
    <scope>PROLINE AND CYSTEINE ACTIVATION</scope>
    <scope>LACK OF EDITING ACTIVITY</scope>
    <scope>KINETIC PARAMETERS</scope>
</reference>
<gene>
    <name type="primary">proS</name>
    <name type="ordered locus">CLOST_2239</name>
</gene>
<organism>
    <name type="scientific">Acetoanaerobium sticklandii (strain ATCC 12662 / DSM 519 / JCM 1433 / CCUG 9281 / NCIMB 10654 / HF)</name>
    <name type="common">Clostridium sticklandii</name>
    <dbReference type="NCBI Taxonomy" id="499177"/>
    <lineage>
        <taxon>Bacteria</taxon>
        <taxon>Bacillati</taxon>
        <taxon>Bacillota</taxon>
        <taxon>Clostridia</taxon>
        <taxon>Peptostreptococcales</taxon>
        <taxon>Filifactoraceae</taxon>
        <taxon>Acetoanaerobium</taxon>
    </lineage>
</organism>
<dbReference type="EC" id="6.1.1.15"/>
<dbReference type="EMBL" id="AJ130879">
    <property type="protein sequence ID" value="CAB71307.1"/>
    <property type="molecule type" value="Genomic_DNA"/>
</dbReference>
<dbReference type="EMBL" id="FP565809">
    <property type="protein sequence ID" value="CBH22357.1"/>
    <property type="molecule type" value="Genomic_DNA"/>
</dbReference>
<dbReference type="SMR" id="Q9L4Q8"/>
<dbReference type="STRING" id="1511.CLOST_2239"/>
<dbReference type="KEGG" id="cst:CLOST_2239"/>
<dbReference type="eggNOG" id="COG0442">
    <property type="taxonomic scope" value="Bacteria"/>
</dbReference>
<dbReference type="HOGENOM" id="CLU_001882_4_2_9"/>
<dbReference type="SABIO-RK" id="Q9L4Q8"/>
<dbReference type="Proteomes" id="UP000007041">
    <property type="component" value="Chromosome"/>
</dbReference>
<dbReference type="GO" id="GO:0017101">
    <property type="term" value="C:aminoacyl-tRNA synthetase multienzyme complex"/>
    <property type="evidence" value="ECO:0007669"/>
    <property type="project" value="TreeGrafter"/>
</dbReference>
<dbReference type="GO" id="GO:0005737">
    <property type="term" value="C:cytoplasm"/>
    <property type="evidence" value="ECO:0007669"/>
    <property type="project" value="UniProtKB-SubCell"/>
</dbReference>
<dbReference type="GO" id="GO:0005524">
    <property type="term" value="F:ATP binding"/>
    <property type="evidence" value="ECO:0007669"/>
    <property type="project" value="UniProtKB-UniRule"/>
</dbReference>
<dbReference type="GO" id="GO:0140096">
    <property type="term" value="F:catalytic activity, acting on a protein"/>
    <property type="evidence" value="ECO:0007669"/>
    <property type="project" value="UniProtKB-ARBA"/>
</dbReference>
<dbReference type="GO" id="GO:0004827">
    <property type="term" value="F:proline-tRNA ligase activity"/>
    <property type="evidence" value="ECO:0007669"/>
    <property type="project" value="UniProtKB-UniRule"/>
</dbReference>
<dbReference type="GO" id="GO:0016740">
    <property type="term" value="F:transferase activity"/>
    <property type="evidence" value="ECO:0007669"/>
    <property type="project" value="UniProtKB-ARBA"/>
</dbReference>
<dbReference type="GO" id="GO:0006433">
    <property type="term" value="P:prolyl-tRNA aminoacylation"/>
    <property type="evidence" value="ECO:0007669"/>
    <property type="project" value="UniProtKB-UniRule"/>
</dbReference>
<dbReference type="CDD" id="cd00862">
    <property type="entry name" value="ProRS_anticodon_zinc"/>
    <property type="match status" value="1"/>
</dbReference>
<dbReference type="CDD" id="cd00778">
    <property type="entry name" value="ProRS_core_arch_euk"/>
    <property type="match status" value="1"/>
</dbReference>
<dbReference type="FunFam" id="3.40.50.800:FF:000005">
    <property type="entry name" value="bifunctional glutamate/proline--tRNA ligase"/>
    <property type="match status" value="1"/>
</dbReference>
<dbReference type="FunFam" id="3.30.930.10:FF:000023">
    <property type="entry name" value="Proline--tRNA ligase"/>
    <property type="match status" value="1"/>
</dbReference>
<dbReference type="Gene3D" id="3.40.50.800">
    <property type="entry name" value="Anticodon-binding domain"/>
    <property type="match status" value="1"/>
</dbReference>
<dbReference type="Gene3D" id="3.30.930.10">
    <property type="entry name" value="Bira Bifunctional Protein, Domain 2"/>
    <property type="match status" value="1"/>
</dbReference>
<dbReference type="Gene3D" id="3.30.110.30">
    <property type="entry name" value="C-terminal domain of ProRS"/>
    <property type="match status" value="1"/>
</dbReference>
<dbReference type="HAMAP" id="MF_01571">
    <property type="entry name" value="Pro_tRNA_synth_type3"/>
    <property type="match status" value="1"/>
</dbReference>
<dbReference type="InterPro" id="IPR002314">
    <property type="entry name" value="aa-tRNA-synt_IIb"/>
</dbReference>
<dbReference type="InterPro" id="IPR006195">
    <property type="entry name" value="aa-tRNA-synth_II"/>
</dbReference>
<dbReference type="InterPro" id="IPR045864">
    <property type="entry name" value="aa-tRNA-synth_II/BPL/LPL"/>
</dbReference>
<dbReference type="InterPro" id="IPR004154">
    <property type="entry name" value="Anticodon-bd"/>
</dbReference>
<dbReference type="InterPro" id="IPR036621">
    <property type="entry name" value="Anticodon-bd_dom_sf"/>
</dbReference>
<dbReference type="InterPro" id="IPR002316">
    <property type="entry name" value="Pro-tRNA-ligase_IIa"/>
</dbReference>
<dbReference type="InterPro" id="IPR004499">
    <property type="entry name" value="Pro-tRNA-ligase_IIa_arc-type"/>
</dbReference>
<dbReference type="InterPro" id="IPR016061">
    <property type="entry name" value="Pro-tRNA_ligase_II_C"/>
</dbReference>
<dbReference type="InterPro" id="IPR017449">
    <property type="entry name" value="Pro-tRNA_synth_II"/>
</dbReference>
<dbReference type="InterPro" id="IPR033721">
    <property type="entry name" value="ProRS_core_arch_euk"/>
</dbReference>
<dbReference type="NCBIfam" id="TIGR00408">
    <property type="entry name" value="proS_fam_I"/>
    <property type="match status" value="1"/>
</dbReference>
<dbReference type="PANTHER" id="PTHR43382:SF2">
    <property type="entry name" value="BIFUNCTIONAL GLUTAMATE_PROLINE--TRNA LIGASE"/>
    <property type="match status" value="1"/>
</dbReference>
<dbReference type="PANTHER" id="PTHR43382">
    <property type="entry name" value="PROLYL-TRNA SYNTHETASE"/>
    <property type="match status" value="1"/>
</dbReference>
<dbReference type="Pfam" id="PF03129">
    <property type="entry name" value="HGTP_anticodon"/>
    <property type="match status" value="1"/>
</dbReference>
<dbReference type="Pfam" id="PF09180">
    <property type="entry name" value="ProRS-C_1"/>
    <property type="match status" value="1"/>
</dbReference>
<dbReference type="Pfam" id="PF00587">
    <property type="entry name" value="tRNA-synt_2b"/>
    <property type="match status" value="1"/>
</dbReference>
<dbReference type="PRINTS" id="PR01046">
    <property type="entry name" value="TRNASYNTHPRO"/>
</dbReference>
<dbReference type="SMART" id="SM00946">
    <property type="entry name" value="ProRS-C_1"/>
    <property type="match status" value="1"/>
</dbReference>
<dbReference type="SUPFAM" id="SSF64586">
    <property type="entry name" value="C-terminal domain of ProRS"/>
    <property type="match status" value="1"/>
</dbReference>
<dbReference type="SUPFAM" id="SSF52954">
    <property type="entry name" value="Class II aaRS ABD-related"/>
    <property type="match status" value="1"/>
</dbReference>
<dbReference type="SUPFAM" id="SSF55681">
    <property type="entry name" value="Class II aaRS and biotin synthetases"/>
    <property type="match status" value="1"/>
</dbReference>
<dbReference type="PROSITE" id="PS50862">
    <property type="entry name" value="AA_TRNA_LIGASE_II"/>
    <property type="match status" value="1"/>
</dbReference>
<evidence type="ECO:0000250" key="1"/>
<evidence type="ECO:0000269" key="2">
    <source>
    </source>
</evidence>
<evidence type="ECO:0000305" key="3"/>
<sequence>MAKKDQEFVKDITNMDEDFPQWYTDVITKTDLVDYSPVKGFMVIKPYGYAIWENIQAFLDRRFKETGHQNCYFPLLIPESLLNKEKEHVEGFAPEVAWVTHGGSEKLAERLCVRPTSETIICSMYSKWLTSYRELPYLYNQWCSVVRWEKSTRPFLRTSEFLWQEGHTLHETAEEAQAETLQMLAIYKEMAEDLLAIPVVDGRKSDRERFAGAAATYTIEALMHDGKALQSGTSHNLAQHFTKAFDITFQGRTGELEYPHHTSWGASTRLIGGIIMVHGDNRGLVLPPRVAPTQVVIIPIAQNKEGVLDKAYEIKKELEAKGIRVTLDDDTNYSPGWKFNQYEMKGVPLRLEIGPRDIENNVAMIARRDTLSKDSYSLDNIGDTVKNLLDTVHTDMLERARAHRDSKTFTFKDYEEFKRKMIETPGFAKGMWCGEEECEAKIKEDTGVTIRCIPFVQENLGETCQFCGKPAKHMVYLAKAY</sequence>
<comment type="function">
    <text>Catalyzes the attachment of proline to tRNA(Pro) in a two-step reaction: proline is first activated by ATP to form Pro-AMP and then transferred to the acceptor end of tRNA(Pro). Can inadvertently accommodate and process cysteine. Misacylated Cys-tRNA(Pro) is not edited by ProRS; this function may be provided by ProX.</text>
</comment>
<comment type="catalytic activity">
    <reaction>
        <text>tRNA(Pro) + L-proline + ATP = L-prolyl-tRNA(Pro) + AMP + diphosphate</text>
        <dbReference type="Rhea" id="RHEA:14305"/>
        <dbReference type="Rhea" id="RHEA-COMP:9700"/>
        <dbReference type="Rhea" id="RHEA-COMP:9702"/>
        <dbReference type="ChEBI" id="CHEBI:30616"/>
        <dbReference type="ChEBI" id="CHEBI:33019"/>
        <dbReference type="ChEBI" id="CHEBI:60039"/>
        <dbReference type="ChEBI" id="CHEBI:78442"/>
        <dbReference type="ChEBI" id="CHEBI:78532"/>
        <dbReference type="ChEBI" id="CHEBI:456215"/>
        <dbReference type="EC" id="6.1.1.15"/>
    </reaction>
</comment>
<comment type="biophysicochemical properties">
    <kinetics>
        <KM evidence="2">0.05 mM for proline</KM>
        <KM evidence="2">0.01 mM for cysteine</KM>
    </kinetics>
</comment>
<comment type="subunit">
    <text evidence="1">Homodimer.</text>
</comment>
<comment type="subcellular location">
    <subcellularLocation>
        <location>Cytoplasm</location>
    </subcellularLocation>
</comment>
<comment type="domain">
    <text evidence="1">Consists of three domains: the N-terminal catalytic domain, the anticodon-binding domain and the C-terminal extension.</text>
</comment>
<comment type="similarity">
    <text evidence="3">Belongs to the class-II aminoacyl-tRNA synthetase family. ProS type 3 subfamily.</text>
</comment>
<name>SYP_ACESD</name>
<proteinExistence type="evidence at protein level"/>
<protein>
    <recommendedName>
        <fullName>Proline--tRNA ligase</fullName>
        <ecNumber>6.1.1.15</ecNumber>
    </recommendedName>
    <alternativeName>
        <fullName>Prolyl-tRNA synthetase</fullName>
        <shortName>ProRS</shortName>
    </alternativeName>
</protein>
<keyword id="KW-0030">Aminoacyl-tRNA synthetase</keyword>
<keyword id="KW-0067">ATP-binding</keyword>
<keyword id="KW-0963">Cytoplasm</keyword>
<keyword id="KW-0436">Ligase</keyword>
<keyword id="KW-0547">Nucleotide-binding</keyword>
<keyword id="KW-0648">Protein biosynthesis</keyword>
<keyword id="KW-1185">Reference proteome</keyword>